<name>PHOG1_DIALO</name>
<feature type="chain" id="PRO_0000458390" description="Oligopeptidase PhomG">
    <location>
        <begin position="1"/>
        <end position="713"/>
    </location>
</feature>
<feature type="active site" evidence="2">
    <location>
        <position position="462"/>
    </location>
</feature>
<feature type="binding site" evidence="2">
    <location>
        <position position="461"/>
    </location>
    <ligand>
        <name>Zn(2+)</name>
        <dbReference type="ChEBI" id="CHEBI:29105"/>
        <note>catalytic</note>
    </ligand>
</feature>
<feature type="binding site" evidence="2">
    <location>
        <position position="465"/>
    </location>
    <ligand>
        <name>Zn(2+)</name>
        <dbReference type="ChEBI" id="CHEBI:29105"/>
        <note>catalytic</note>
    </ligand>
</feature>
<feature type="binding site" evidence="2">
    <location>
        <position position="468"/>
    </location>
    <ligand>
        <name>Zn(2+)</name>
        <dbReference type="ChEBI" id="CHEBI:29105"/>
        <note>catalytic</note>
    </ligand>
</feature>
<accession>A0A8J9S3C0</accession>
<protein>
    <recommendedName>
        <fullName evidence="4">Oligopeptidase PhomG</fullName>
        <ecNumber evidence="6">3.4.24.-</ecNumber>
    </recommendedName>
    <alternativeName>
        <fullName evidence="4">Phomopsin biosynthesis cluster protein G</fullName>
    </alternativeName>
</protein>
<keyword id="KW-0378">Hydrolase</keyword>
<keyword id="KW-0479">Metal-binding</keyword>
<keyword id="KW-0482">Metalloprotease</keyword>
<keyword id="KW-0645">Protease</keyword>
<keyword id="KW-0843">Virulence</keyword>
<keyword id="KW-0862">Zinc</keyword>
<organism>
    <name type="scientific">Diaporthe leptostromiformis</name>
    <name type="common">Lupinosis disease fungus</name>
    <name type="synonym">Phomopsis leptostromiformis</name>
    <dbReference type="NCBI Taxonomy" id="291059"/>
    <lineage>
        <taxon>Eukaryota</taxon>
        <taxon>Fungi</taxon>
        <taxon>Dikarya</taxon>
        <taxon>Ascomycota</taxon>
        <taxon>Pezizomycotina</taxon>
        <taxon>Sordariomycetes</taxon>
        <taxon>Sordariomycetidae</taxon>
        <taxon>Diaporthales</taxon>
        <taxon>Diaporthaceae</taxon>
        <taxon>Diaporthe</taxon>
    </lineage>
</organism>
<comment type="function">
    <text evidence="3 6">Oligopeptidase; part of the gene cluster that mediates the biosynthesis of the phomopsins, a group of hexapeptide mycotoxins which infects lupins and causes lupinosis disease in livestock (PubMed:34608734). Within the pathway, phomG and phomG' are probably involved in the processing of the phomA and phomA' precursors (Probable). The pathway starts with the processing of the precursor phomA by several endopeptidases including kexin proteases as well as the cluster-specific S41 family peptidase phomP1 and the oligopeptidase phomG to produce 10 identical copies of the hexapeptide Tyr-Val-Ile-Pro-Ile-Asp. After being excised from the precursor peptide, the core peptides are cyclized and modified post-translationally by enzymes encoded within the gene cluster. The timing and order of proteolysis of the phomA precursor and PTMs are still unknown. Two tyrosinase-like enzymes, phomQ1 and phomQ2, catalyze the chlorination and hydroxylation of Tyr, respectively. PhomYb, is proposed to be involved in the construction of the macrocyclic structure. The other 4 ustYa family proteins may be involved in PTMs that generate the unique structure of phomopsin A. PhomYa is required for the hydroxylation of C-beta of Tyr. PhomYc, phomYd, and phomYe are responsible for the biosynthesis of 2,3-dehydroisoleucine (dIle), 2,3-dehydroaspartic acid (dAsp), and 3,4-dehydroproline (dPro), respectively. While dIle formation by phomYc is indispensable for the installation of dAsp by phomYd, the order of the other PTMs have not been elucidated yet. Most of the biosynthetic enzymes likely have broad substrate specificity, and thus, there might be a metabolic grid from a precursor to phomopsin A. The enzyme(s) responsible for the biosynthesis of 3,4-dehydrovaline (dVal) have also not been identified yet. Finally, phomM acts as an S-adenosylmethionine-dependent alpha-N-methyltransferase that catalyzes two successive N-methylation reactions, converting N-desmethyl-phomopsin A to phomopsin A and phomopsin A further to an N,N-dimethylated congener called phomopsin E (Probable).</text>
</comment>
<comment type="cofactor">
    <cofactor evidence="2">
        <name>Zn(2+)</name>
        <dbReference type="ChEBI" id="CHEBI:29105"/>
    </cofactor>
    <text evidence="2">Binds 1 zinc ion per subunit.</text>
</comment>
<comment type="pathway">
    <text evidence="6">Mycotoxin biosynthesis.</text>
</comment>
<comment type="subunit">
    <text evidence="1">Monomer.</text>
</comment>
<comment type="similarity">
    <text evidence="5">Belongs to the peptidase M3 family.</text>
</comment>
<evidence type="ECO:0000250" key="1">
    <source>
        <dbReference type="UniProtKB" id="P47788"/>
    </source>
</evidence>
<evidence type="ECO:0000250" key="2">
    <source>
        <dbReference type="UniProtKB" id="P52888"/>
    </source>
</evidence>
<evidence type="ECO:0000269" key="3">
    <source>
    </source>
</evidence>
<evidence type="ECO:0000303" key="4">
    <source>
    </source>
</evidence>
<evidence type="ECO:0000305" key="5"/>
<evidence type="ECO:0000305" key="6">
    <source>
    </source>
</evidence>
<sequence length="713" mass="80820">MDLLGDQHFAAQQPPLFDATPSSLKEDAEELIAETIAAWDSIVSQIQTENATFLTFYSSTSPSKDLRDASTAVGRLFNDAEIELYSRQDMFERVDQVLQQQDKQVVASLDEESLYYIQKLHRRFHQNGCGIAEEGQRVTFKTKMKRLGHLVQQCNKNLNEDKSGVWLGLDELDGIPQSLISRLKQGDGENSDHLWLPTKVPFSSPAITNAKSEATRKRIYCAIQNRMEMNVPLFREIVLLRDETARLLGYADHATLKTADKMMQTPQAVEALLSEIRTAVAPLAAQDVEELLEIKRNEAESRGTTADELYFWDLAYYSARRGEAEKKISSSISEYFELNTTLAKLLSIIEHLFGTRFRRVNAAGRDEAAGSLIWHKDVQMYSVWNVDGPKEFLGTLFSATGEPPRPPTPPQSLVIPTALQGYENTDGSLFLASSALVMNYVRPTDTRPTLLSLDEVRKLFHEIGHLLHSQWTQTKYAALHHVDRDFVEAPSMMLEQFFWVEQHIKDVSFHYSHINSKMKDMWKATLVDQDETNPPEKPAQLSDDVVFNLARANQSKAIQGQLKEVFFATYDMLVHKPASRAALEALNLTELFNKTRSDVYKVRGGEALGEGWEWGHGQTVFRNILNRYDAGYYSYLLGRVFAMDIFDAGFKEKTTSREAGRRYRDMVYRVGGRQAEMKTMTDYLGHEPSTHPYLAWLQGTRIGDSGPTVAVPT</sequence>
<proteinExistence type="inferred from homology"/>
<dbReference type="EC" id="3.4.24.-" evidence="6"/>
<dbReference type="EMBL" id="LC646903">
    <property type="protein sequence ID" value="BDA39153.1"/>
    <property type="molecule type" value="Genomic_DNA"/>
</dbReference>
<dbReference type="SMR" id="A0A8J9S3C0"/>
<dbReference type="GO" id="GO:0005758">
    <property type="term" value="C:mitochondrial intermembrane space"/>
    <property type="evidence" value="ECO:0007669"/>
    <property type="project" value="TreeGrafter"/>
</dbReference>
<dbReference type="GO" id="GO:0046872">
    <property type="term" value="F:metal ion binding"/>
    <property type="evidence" value="ECO:0007669"/>
    <property type="project" value="UniProtKB-KW"/>
</dbReference>
<dbReference type="GO" id="GO:0004222">
    <property type="term" value="F:metalloendopeptidase activity"/>
    <property type="evidence" value="ECO:0007669"/>
    <property type="project" value="InterPro"/>
</dbReference>
<dbReference type="GO" id="GO:0006518">
    <property type="term" value="P:peptide metabolic process"/>
    <property type="evidence" value="ECO:0007669"/>
    <property type="project" value="TreeGrafter"/>
</dbReference>
<dbReference type="GO" id="GO:0006508">
    <property type="term" value="P:proteolysis"/>
    <property type="evidence" value="ECO:0007669"/>
    <property type="project" value="UniProtKB-KW"/>
</dbReference>
<dbReference type="CDD" id="cd06455">
    <property type="entry name" value="M3A_TOP"/>
    <property type="match status" value="1"/>
</dbReference>
<dbReference type="Gene3D" id="3.40.390.10">
    <property type="entry name" value="Collagenase (Catalytic Domain)"/>
    <property type="match status" value="1"/>
</dbReference>
<dbReference type="Gene3D" id="1.20.1050.40">
    <property type="entry name" value="Endopeptidase. Chain P, domain 1"/>
    <property type="match status" value="1"/>
</dbReference>
<dbReference type="Gene3D" id="1.10.1370.10">
    <property type="entry name" value="Neurolysin, domain 3"/>
    <property type="match status" value="1"/>
</dbReference>
<dbReference type="InterPro" id="IPR024079">
    <property type="entry name" value="MetalloPept_cat_dom_sf"/>
</dbReference>
<dbReference type="InterPro" id="IPR024077">
    <property type="entry name" value="Neurolysin/TOP_dom2"/>
</dbReference>
<dbReference type="InterPro" id="IPR024080">
    <property type="entry name" value="Neurolysin/TOP_N"/>
</dbReference>
<dbReference type="InterPro" id="IPR045090">
    <property type="entry name" value="Pept_M3A_M3B"/>
</dbReference>
<dbReference type="InterPro" id="IPR001567">
    <property type="entry name" value="Pept_M3A_M3B_dom"/>
</dbReference>
<dbReference type="PANTHER" id="PTHR11804">
    <property type="entry name" value="PROTEASE M3 THIMET OLIGOPEPTIDASE-RELATED"/>
    <property type="match status" value="1"/>
</dbReference>
<dbReference type="PANTHER" id="PTHR11804:SF84">
    <property type="entry name" value="SACCHAROLYSIN"/>
    <property type="match status" value="1"/>
</dbReference>
<dbReference type="Pfam" id="PF01432">
    <property type="entry name" value="Peptidase_M3"/>
    <property type="match status" value="1"/>
</dbReference>
<dbReference type="SUPFAM" id="SSF55486">
    <property type="entry name" value="Metalloproteases ('zincins'), catalytic domain"/>
    <property type="match status" value="1"/>
</dbReference>
<gene>
    <name evidence="4" type="primary">phomG</name>
</gene>
<reference key="1">
    <citation type="journal article" date="2021" name="Angew. Chem. Int. Ed.">
        <title>Biosynthetic studies of phomopsins unveil posttranslational installation of dehydroamino acids by ustYa family proteins.</title>
        <authorList>
            <person name="Sogahata K."/>
            <person name="Ozaki T."/>
            <person name="Igarashi Y."/>
            <person name="Naganuma Y."/>
            <person name="Liu C."/>
            <person name="Minami A."/>
            <person name="Oikawa H."/>
        </authorList>
    </citation>
    <scope>NUCLEOTIDE SEQUENCE [GENOMIC DNA]</scope>
    <scope>FUNCTION</scope>
    <source>
        <strain>ATCC 26115 / IMI 115107 / C 1557</strain>
    </source>
</reference>